<reference key="1">
    <citation type="journal article" date="1998" name="Nature">
        <title>Deciphering the biology of Mycobacterium tuberculosis from the complete genome sequence.</title>
        <authorList>
            <person name="Cole S.T."/>
            <person name="Brosch R."/>
            <person name="Parkhill J."/>
            <person name="Garnier T."/>
            <person name="Churcher C.M."/>
            <person name="Harris D.E."/>
            <person name="Gordon S.V."/>
            <person name="Eiglmeier K."/>
            <person name="Gas S."/>
            <person name="Barry C.E. III"/>
            <person name="Tekaia F."/>
            <person name="Badcock K."/>
            <person name="Basham D."/>
            <person name="Brown D."/>
            <person name="Chillingworth T."/>
            <person name="Connor R."/>
            <person name="Davies R.M."/>
            <person name="Devlin K."/>
            <person name="Feltwell T."/>
            <person name="Gentles S."/>
            <person name="Hamlin N."/>
            <person name="Holroyd S."/>
            <person name="Hornsby T."/>
            <person name="Jagels K."/>
            <person name="Krogh A."/>
            <person name="McLean J."/>
            <person name="Moule S."/>
            <person name="Murphy L.D."/>
            <person name="Oliver S."/>
            <person name="Osborne J."/>
            <person name="Quail M.A."/>
            <person name="Rajandream M.A."/>
            <person name="Rogers J."/>
            <person name="Rutter S."/>
            <person name="Seeger K."/>
            <person name="Skelton S."/>
            <person name="Squares S."/>
            <person name="Squares R."/>
            <person name="Sulston J.E."/>
            <person name="Taylor K."/>
            <person name="Whitehead S."/>
            <person name="Barrell B.G."/>
        </authorList>
    </citation>
    <scope>NUCLEOTIDE SEQUENCE [LARGE SCALE GENOMIC DNA]</scope>
    <source>
        <strain>ATCC 25618 / H37Rv</strain>
    </source>
</reference>
<reference key="2">
    <citation type="journal article" date="2005" name="Nucleic Acids Res.">
        <title>Toxin-antitoxin loci are highly abundant in free-living but lost from host-associated prokaryotes.</title>
        <authorList>
            <person name="Pandey D.P."/>
            <person name="Gerdes K."/>
        </authorList>
    </citation>
    <scope>POSSIBLE FUNCTION</scope>
    <source>
        <strain>ATCC 25618 / H37Rv</strain>
    </source>
</reference>
<reference key="3">
    <citation type="journal article" date="2009" name="FEMS Microbiol. Lett.">
        <title>Killing activity and rescue function of genome-wide toxin-antitoxin loci of Mycobacterium tuberculosis.</title>
        <authorList>
            <person name="Gupta A."/>
        </authorList>
    </citation>
    <scope>EXPRESSION IN E.COLI</scope>
    <scope>FUNCTION AS A TOXIN</scope>
    <source>
        <strain>ATCC 25618 / H37Rv</strain>
    </source>
</reference>
<reference key="4">
    <citation type="journal article" date="2009" name="PLoS Genet.">
        <title>Comprehensive functional analysis of Mycobacterium tuberculosis toxin-antitoxin systems: implications for pathogenesis, stress responses, and evolution.</title>
        <authorList>
            <person name="Ramage H.R."/>
            <person name="Connolly L.E."/>
            <person name="Cox J.S."/>
        </authorList>
    </citation>
    <scope>EXPRESSION IN M.SMEGMATIS</scope>
    <scope>FUNCTION AS A TOXIN</scope>
    <scope>FUNCTION AS AN RNASE</scope>
    <scope>INDUCTION DURING MACROPHAGE INFECTION</scope>
    <source>
        <strain>ATCC 35801 / TMC 107 / Erdman</strain>
    </source>
</reference>
<reference key="5">
    <citation type="journal article" date="2011" name="Mol. Cell. Proteomics">
        <title>Proteogenomic analysis of Mycobacterium tuberculosis by high resolution mass spectrometry.</title>
        <authorList>
            <person name="Kelkar D.S."/>
            <person name="Kumar D."/>
            <person name="Kumar P."/>
            <person name="Balakrishnan L."/>
            <person name="Muthusamy B."/>
            <person name="Yadav A.K."/>
            <person name="Shrivastava P."/>
            <person name="Marimuthu A."/>
            <person name="Anand S."/>
            <person name="Sundaram H."/>
            <person name="Kingsbury R."/>
            <person name="Harsha H.C."/>
            <person name="Nair B."/>
            <person name="Prasad T.S."/>
            <person name="Chauhan D.S."/>
            <person name="Katoch K."/>
            <person name="Katoch V.M."/>
            <person name="Kumar P."/>
            <person name="Chaerkady R."/>
            <person name="Ramachandran S."/>
            <person name="Dash D."/>
            <person name="Pandey A."/>
        </authorList>
    </citation>
    <scope>IDENTIFICATION BY MASS SPECTROMETRY [LARGE SCALE ANALYSIS]</scope>
    <source>
        <strain>ATCC 25618 / H37Rv</strain>
    </source>
</reference>
<feature type="chain" id="PRO_0000103883" description="Ribonuclease VapC11">
    <location>
        <begin position="1"/>
        <end position="134"/>
    </location>
</feature>
<feature type="domain" description="PINc" evidence="1">
    <location>
        <begin position="2"/>
        <end position="126"/>
    </location>
</feature>
<feature type="binding site" evidence="1">
    <location>
        <position position="5"/>
    </location>
    <ligand>
        <name>Mg(2+)</name>
        <dbReference type="ChEBI" id="CHEBI:18420"/>
    </ligand>
</feature>
<feature type="binding site" evidence="1">
    <location>
        <position position="98"/>
    </location>
    <ligand>
        <name>Mg(2+)</name>
        <dbReference type="ChEBI" id="CHEBI:18420"/>
    </ligand>
</feature>
<feature type="strand" evidence="4">
    <location>
        <begin position="2"/>
        <end position="4"/>
    </location>
</feature>
<feature type="helix" evidence="4">
    <location>
        <begin position="6"/>
        <end position="13"/>
    </location>
</feature>
<feature type="helix" evidence="4">
    <location>
        <begin position="19"/>
        <end position="30"/>
    </location>
</feature>
<feature type="helix" evidence="4">
    <location>
        <begin position="32"/>
        <end position="34"/>
    </location>
</feature>
<feature type="strand" evidence="4">
    <location>
        <begin position="35"/>
        <end position="37"/>
    </location>
</feature>
<feature type="helix" evidence="4">
    <location>
        <begin position="39"/>
        <end position="47"/>
    </location>
</feature>
<feature type="helix" evidence="4">
    <location>
        <begin position="52"/>
        <end position="64"/>
    </location>
</feature>
<feature type="turn" evidence="4">
    <location>
        <begin position="72"/>
        <end position="74"/>
    </location>
</feature>
<feature type="helix" evidence="4">
    <location>
        <begin position="75"/>
        <end position="88"/>
    </location>
</feature>
<feature type="helix" evidence="4">
    <location>
        <begin position="96"/>
        <end position="108"/>
    </location>
</feature>
<feature type="strand" evidence="4">
    <location>
        <begin position="111"/>
        <end position="114"/>
    </location>
</feature>
<feature type="helix" evidence="4">
    <location>
        <begin position="117"/>
        <end position="125"/>
    </location>
</feature>
<feature type="strand" evidence="4">
    <location>
        <begin position="129"/>
        <end position="132"/>
    </location>
</feature>
<dbReference type="EC" id="3.1.-.-" evidence="1"/>
<dbReference type="EMBL" id="AL123456">
    <property type="protein sequence ID" value="CCP44325.1"/>
    <property type="molecule type" value="Genomic_DNA"/>
</dbReference>
<dbReference type="PIR" id="F70763">
    <property type="entry name" value="F70763"/>
</dbReference>
<dbReference type="RefSeq" id="NP_216077.1">
    <property type="nucleotide sequence ID" value="NC_000962.3"/>
</dbReference>
<dbReference type="RefSeq" id="WP_003407786.1">
    <property type="nucleotide sequence ID" value="NZ_NVQJ01000004.1"/>
</dbReference>
<dbReference type="PDB" id="6A7V">
    <property type="method" value="X-ray"/>
    <property type="resolution" value="1.67 A"/>
    <property type="chains" value="A/C/E/G=2-134"/>
</dbReference>
<dbReference type="PDBsum" id="6A7V"/>
<dbReference type="SMR" id="P9WFA5"/>
<dbReference type="STRING" id="83332.Rv1561"/>
<dbReference type="PaxDb" id="83332-Rv1561"/>
<dbReference type="DNASU" id="886361"/>
<dbReference type="GeneID" id="886361"/>
<dbReference type="KEGG" id="mtu:Rv1561"/>
<dbReference type="KEGG" id="mtv:RVBD_1561"/>
<dbReference type="TubercuList" id="Rv1561"/>
<dbReference type="eggNOG" id="COG1487">
    <property type="taxonomic scope" value="Bacteria"/>
</dbReference>
<dbReference type="InParanoid" id="P9WFA5"/>
<dbReference type="OrthoDB" id="9811788at2"/>
<dbReference type="PhylomeDB" id="P9WFA5"/>
<dbReference type="Proteomes" id="UP000001584">
    <property type="component" value="Chromosome"/>
</dbReference>
<dbReference type="GO" id="GO:0000287">
    <property type="term" value="F:magnesium ion binding"/>
    <property type="evidence" value="ECO:0007669"/>
    <property type="project" value="UniProtKB-UniRule"/>
</dbReference>
<dbReference type="GO" id="GO:0004540">
    <property type="term" value="F:RNA nuclease activity"/>
    <property type="evidence" value="ECO:0000314"/>
    <property type="project" value="MTBBASE"/>
</dbReference>
<dbReference type="GO" id="GO:0017148">
    <property type="term" value="P:negative regulation of translation"/>
    <property type="evidence" value="ECO:0000315"/>
    <property type="project" value="MTBBASE"/>
</dbReference>
<dbReference type="GO" id="GO:0075136">
    <property type="term" value="P:response to host"/>
    <property type="evidence" value="ECO:0000270"/>
    <property type="project" value="MTBBASE"/>
</dbReference>
<dbReference type="GO" id="GO:0044003">
    <property type="term" value="P:symbiont-mediated perturbation of host process"/>
    <property type="evidence" value="ECO:0000315"/>
    <property type="project" value="MTBBASE"/>
</dbReference>
<dbReference type="CDD" id="cd18756">
    <property type="entry name" value="PIN_MtVapC15-VapC11-like"/>
    <property type="match status" value="1"/>
</dbReference>
<dbReference type="Gene3D" id="3.40.50.1010">
    <property type="entry name" value="5'-nuclease"/>
    <property type="match status" value="1"/>
</dbReference>
<dbReference type="HAMAP" id="MF_00265">
    <property type="entry name" value="VapC_Nob1"/>
    <property type="match status" value="1"/>
</dbReference>
<dbReference type="InterPro" id="IPR029060">
    <property type="entry name" value="PIN-like_dom_sf"/>
</dbReference>
<dbReference type="InterPro" id="IPR002716">
    <property type="entry name" value="PIN_dom"/>
</dbReference>
<dbReference type="InterPro" id="IPR051749">
    <property type="entry name" value="PINc/VapC_TA_RNase"/>
</dbReference>
<dbReference type="InterPro" id="IPR022907">
    <property type="entry name" value="VapC_family"/>
</dbReference>
<dbReference type="PANTHER" id="PTHR42740">
    <property type="entry name" value="RIBONUCLEASE VAPC3"/>
    <property type="match status" value="1"/>
</dbReference>
<dbReference type="PANTHER" id="PTHR42740:SF1">
    <property type="entry name" value="RIBONUCLEASE VAPC3"/>
    <property type="match status" value="1"/>
</dbReference>
<dbReference type="Pfam" id="PF01850">
    <property type="entry name" value="PIN"/>
    <property type="match status" value="1"/>
</dbReference>
<dbReference type="SUPFAM" id="SSF88723">
    <property type="entry name" value="PIN domain-like"/>
    <property type="match status" value="1"/>
</dbReference>
<accession>P9WFA5</accession>
<accession>L0T8M0</accession>
<accession>P64879</accession>
<accession>Q10770</accession>
<name>VPC11_MYCTU</name>
<sequence>MILIDTSAWVEYFRATGSIAAVEVRRLLSEEAARIAMCEPIAMEILSGALDDNTHTTLERLVNGLPSLNVDDAIDFRAAAGIYRAARRAGETVRSINDCLIAALAIRHGARIVHRDADFDVIARITNLQAASFR</sequence>
<protein>
    <recommendedName>
        <fullName evidence="1">Ribonuclease VapC11</fullName>
        <shortName evidence="1">RNase VapC11</shortName>
        <ecNumber evidence="1">3.1.-.-</ecNumber>
    </recommendedName>
    <alternativeName>
        <fullName evidence="1">Toxin VapC11</fullName>
    </alternativeName>
</protein>
<gene>
    <name evidence="1" type="primary">vapC11</name>
    <name type="ordered locus">Rv1561</name>
    <name type="ORF">MTCY48.04c</name>
</gene>
<evidence type="ECO:0000255" key="1">
    <source>
        <dbReference type="HAMAP-Rule" id="MF_00265"/>
    </source>
</evidence>
<evidence type="ECO:0000269" key="2">
    <source>
    </source>
</evidence>
<evidence type="ECO:0000269" key="3">
    <source>
    </source>
</evidence>
<evidence type="ECO:0007829" key="4">
    <source>
        <dbReference type="PDB" id="6A7V"/>
    </source>
</evidence>
<keyword id="KW-0002">3D-structure</keyword>
<keyword id="KW-0378">Hydrolase</keyword>
<keyword id="KW-0460">Magnesium</keyword>
<keyword id="KW-0479">Metal-binding</keyword>
<keyword id="KW-0540">Nuclease</keyword>
<keyword id="KW-1185">Reference proteome</keyword>
<keyword id="KW-1277">Toxin-antitoxin system</keyword>
<proteinExistence type="evidence at protein level"/>
<comment type="function">
    <text evidence="2 3">Toxic component of a type II toxin-antitoxin (TA) system. Acts as an RNase. Upon expression in E.coli and M.smegmatis inhibits translation, cell growth and colony formation. Its toxic effects on cell growth and colony formation are neutralized by coexpression with cognate antitoxin VapB11; the effect on translation has not been tested but is probably also neutralized.</text>
</comment>
<comment type="cofactor">
    <cofactor evidence="1">
        <name>Mg(2+)</name>
        <dbReference type="ChEBI" id="CHEBI:18420"/>
    </cofactor>
</comment>
<comment type="induction">
    <text evidence="3">Induced during infection of mouse macrophages.</text>
</comment>
<comment type="similarity">
    <text evidence="1">Belongs to the PINc/VapC protein family.</text>
</comment>
<organism>
    <name type="scientific">Mycobacterium tuberculosis (strain ATCC 25618 / H37Rv)</name>
    <dbReference type="NCBI Taxonomy" id="83332"/>
    <lineage>
        <taxon>Bacteria</taxon>
        <taxon>Bacillati</taxon>
        <taxon>Actinomycetota</taxon>
        <taxon>Actinomycetes</taxon>
        <taxon>Mycobacteriales</taxon>
        <taxon>Mycobacteriaceae</taxon>
        <taxon>Mycobacterium</taxon>
        <taxon>Mycobacterium tuberculosis complex</taxon>
    </lineage>
</organism>